<geneLocation type="mitochondrion"/>
<keyword id="KW-0249">Electron transport</keyword>
<keyword id="KW-0349">Heme</keyword>
<keyword id="KW-0408">Iron</keyword>
<keyword id="KW-0472">Membrane</keyword>
<keyword id="KW-0479">Metal-binding</keyword>
<keyword id="KW-0496">Mitochondrion</keyword>
<keyword id="KW-0999">Mitochondrion inner membrane</keyword>
<keyword id="KW-0679">Respiratory chain</keyword>
<keyword id="KW-0812">Transmembrane</keyword>
<keyword id="KW-1133">Transmembrane helix</keyword>
<keyword id="KW-0813">Transport</keyword>
<keyword id="KW-0830">Ubiquinone</keyword>
<comment type="function">
    <text evidence="2">Component of the ubiquinol-cytochrome c reductase complex (complex III or cytochrome b-c1 complex) that is part of the mitochondrial respiratory chain. The b-c1 complex mediates electron transfer from ubiquinol to cytochrome c. Contributes to the generation of a proton gradient across the mitochondrial membrane that is then used for ATP synthesis.</text>
</comment>
<comment type="cofactor">
    <cofactor evidence="2">
        <name>heme b</name>
        <dbReference type="ChEBI" id="CHEBI:60344"/>
    </cofactor>
    <text evidence="2">Binds 2 heme b groups non-covalently.</text>
</comment>
<comment type="subunit">
    <text evidence="2">The cytochrome bc1 complex contains 11 subunits: 3 respiratory subunits (MT-CYB, CYC1 and UQCRFS1), 2 core proteins (UQCRC1 and UQCRC2) and 6 low-molecular weight proteins (UQCRH/QCR6, UQCRB/QCR7, UQCRQ/QCR8, UQCR10/QCR9, UQCR11/QCR10 and a cleavage product of UQCRFS1). This cytochrome bc1 complex then forms a dimer.</text>
</comment>
<comment type="subcellular location">
    <subcellularLocation>
        <location evidence="2">Mitochondrion inner membrane</location>
        <topology evidence="2">Multi-pass membrane protein</topology>
    </subcellularLocation>
</comment>
<comment type="miscellaneous">
    <text evidence="1">Heme 1 (or BL or b562) is low-potential and absorbs at about 562 nm, and heme 2 (or BH or b566) is high-potential and absorbs at about 566 nm.</text>
</comment>
<comment type="similarity">
    <text evidence="3 4">Belongs to the cytochrome b family.</text>
</comment>
<comment type="caution">
    <text evidence="2">The full-length protein contains only eight transmembrane helices, not nine as predicted by bioinformatics tools.</text>
</comment>
<gene>
    <name type="primary">MT-CYB</name>
    <name type="synonym">COB</name>
    <name type="synonym">CYTB</name>
    <name type="synonym">MTCYB</name>
</gene>
<feature type="chain" id="PRO_0000061440" description="Cytochrome b">
    <location>
        <begin position="1"/>
        <end position="379"/>
    </location>
</feature>
<feature type="transmembrane region" description="Helical" evidence="2">
    <location>
        <begin position="33"/>
        <end position="53"/>
    </location>
</feature>
<feature type="transmembrane region" description="Helical" evidence="2">
    <location>
        <begin position="77"/>
        <end position="98"/>
    </location>
</feature>
<feature type="transmembrane region" description="Helical" evidence="2">
    <location>
        <begin position="113"/>
        <end position="133"/>
    </location>
</feature>
<feature type="transmembrane region" description="Helical" evidence="2">
    <location>
        <begin position="178"/>
        <end position="198"/>
    </location>
</feature>
<feature type="transmembrane region" description="Helical" evidence="2">
    <location>
        <begin position="226"/>
        <end position="246"/>
    </location>
</feature>
<feature type="transmembrane region" description="Helical" evidence="2">
    <location>
        <begin position="288"/>
        <end position="308"/>
    </location>
</feature>
<feature type="transmembrane region" description="Helical" evidence="2">
    <location>
        <begin position="320"/>
        <end position="340"/>
    </location>
</feature>
<feature type="transmembrane region" description="Helical" evidence="2">
    <location>
        <begin position="347"/>
        <end position="367"/>
    </location>
</feature>
<feature type="binding site" description="axial binding residue" evidence="2">
    <location>
        <position position="83"/>
    </location>
    <ligand>
        <name>heme b</name>
        <dbReference type="ChEBI" id="CHEBI:60344"/>
        <label>b562</label>
    </ligand>
    <ligandPart>
        <name>Fe</name>
        <dbReference type="ChEBI" id="CHEBI:18248"/>
    </ligandPart>
</feature>
<feature type="binding site" description="axial binding residue" evidence="2">
    <location>
        <position position="97"/>
    </location>
    <ligand>
        <name>heme b</name>
        <dbReference type="ChEBI" id="CHEBI:60344"/>
        <label>b566</label>
    </ligand>
    <ligandPart>
        <name>Fe</name>
        <dbReference type="ChEBI" id="CHEBI:18248"/>
    </ligandPart>
</feature>
<feature type="binding site" description="axial binding residue" evidence="2">
    <location>
        <position position="182"/>
    </location>
    <ligand>
        <name>heme b</name>
        <dbReference type="ChEBI" id="CHEBI:60344"/>
        <label>b562</label>
    </ligand>
    <ligandPart>
        <name>Fe</name>
        <dbReference type="ChEBI" id="CHEBI:18248"/>
    </ligandPart>
</feature>
<feature type="binding site" description="axial binding residue" evidence="2">
    <location>
        <position position="196"/>
    </location>
    <ligand>
        <name>heme b</name>
        <dbReference type="ChEBI" id="CHEBI:60344"/>
        <label>b566</label>
    </ligand>
    <ligandPart>
        <name>Fe</name>
        <dbReference type="ChEBI" id="CHEBI:18248"/>
    </ligandPart>
</feature>
<feature type="binding site" evidence="2">
    <location>
        <position position="201"/>
    </location>
    <ligand>
        <name>a ubiquinone</name>
        <dbReference type="ChEBI" id="CHEBI:16389"/>
    </ligand>
</feature>
<evidence type="ECO:0000250" key="1"/>
<evidence type="ECO:0000250" key="2">
    <source>
        <dbReference type="UniProtKB" id="P00157"/>
    </source>
</evidence>
<evidence type="ECO:0000255" key="3">
    <source>
        <dbReference type="PROSITE-ProRule" id="PRU00967"/>
    </source>
</evidence>
<evidence type="ECO:0000255" key="4">
    <source>
        <dbReference type="PROSITE-ProRule" id="PRU00968"/>
    </source>
</evidence>
<reference key="1">
    <citation type="submission" date="2003-10" db="EMBL/GenBank/DDBJ databases">
        <title>61 primate SINEs and the evolution of strepsirrhines.</title>
        <authorList>
            <person name="Roos C."/>
            <person name="Schmitz J."/>
            <person name="Zischler H."/>
        </authorList>
    </citation>
    <scope>NUCLEOTIDE SEQUENCE [GENOMIC DNA]</scope>
</reference>
<proteinExistence type="inferred from homology"/>
<name>CYB_PRODD</name>
<organism>
    <name type="scientific">Propithecus diadema diadema</name>
    <name type="common">Diademed sifaka</name>
    <dbReference type="NCBI Taxonomy" id="171945"/>
    <lineage>
        <taxon>Eukaryota</taxon>
        <taxon>Metazoa</taxon>
        <taxon>Chordata</taxon>
        <taxon>Craniata</taxon>
        <taxon>Vertebrata</taxon>
        <taxon>Euteleostomi</taxon>
        <taxon>Mammalia</taxon>
        <taxon>Eutheria</taxon>
        <taxon>Euarchontoglires</taxon>
        <taxon>Primates</taxon>
        <taxon>Strepsirrhini</taxon>
        <taxon>Lemuriformes</taxon>
        <taxon>Indriidae</taxon>
        <taxon>Propithecus</taxon>
    </lineage>
</organism>
<protein>
    <recommendedName>
        <fullName>Cytochrome b</fullName>
    </recommendedName>
    <alternativeName>
        <fullName>Complex III subunit 3</fullName>
    </alternativeName>
    <alternativeName>
        <fullName>Complex III subunit III</fullName>
    </alternativeName>
    <alternativeName>
        <fullName>Cytochrome b-c1 complex subunit 3</fullName>
    </alternativeName>
    <alternativeName>
        <fullName>Ubiquinol-cytochrome-c reductase complex cytochrome b subunit</fullName>
    </alternativeName>
</protein>
<sequence>MTNIRKNHPLIKIMNSSFIDLPAPSNISSWWNFGSLLGACLALQIITGLFLAMHYTADTTTAFSSVTHICRDVNYGWVIRYLHANGASMFFLCLFIHVGRGLYYGSFVLSETWNIGIILLFTVMATAFMGYVLPWGQMSFWGATVITNLLSAIPYIGTNLVEWIWGGFSVDKATLTRFFAFHFILPFIITALVMVHLLFLHETGSNNPLGIPSNPDKIPFHPYYTIKDLLGLLLLILPLMTLVFFSPDLLGDPDNYTPANPLSTPPHIKPEWYFLFAYAILRSIPNKLGGVLALILSILILAIIPLLQTAKQQSMMFRPLSQCLFWILVADLYTLTWIGGQPVEHPFITIGQTASILYFTLILIAMPTMGLIENKMLKW</sequence>
<accession>Q5VJ61</accession>
<dbReference type="EMBL" id="AY441452">
    <property type="protein sequence ID" value="AAS00133.1"/>
    <property type="molecule type" value="Genomic_DNA"/>
</dbReference>
<dbReference type="SMR" id="Q5VJ61"/>
<dbReference type="GO" id="GO:0005743">
    <property type="term" value="C:mitochondrial inner membrane"/>
    <property type="evidence" value="ECO:0007669"/>
    <property type="project" value="UniProtKB-SubCell"/>
</dbReference>
<dbReference type="GO" id="GO:0045275">
    <property type="term" value="C:respiratory chain complex III"/>
    <property type="evidence" value="ECO:0007669"/>
    <property type="project" value="InterPro"/>
</dbReference>
<dbReference type="GO" id="GO:0046872">
    <property type="term" value="F:metal ion binding"/>
    <property type="evidence" value="ECO:0007669"/>
    <property type="project" value="UniProtKB-KW"/>
</dbReference>
<dbReference type="GO" id="GO:0008121">
    <property type="term" value="F:ubiquinol-cytochrome-c reductase activity"/>
    <property type="evidence" value="ECO:0007669"/>
    <property type="project" value="InterPro"/>
</dbReference>
<dbReference type="GO" id="GO:0006122">
    <property type="term" value="P:mitochondrial electron transport, ubiquinol to cytochrome c"/>
    <property type="evidence" value="ECO:0007669"/>
    <property type="project" value="TreeGrafter"/>
</dbReference>
<dbReference type="CDD" id="cd00290">
    <property type="entry name" value="cytochrome_b_C"/>
    <property type="match status" value="1"/>
</dbReference>
<dbReference type="CDD" id="cd00284">
    <property type="entry name" value="Cytochrome_b_N"/>
    <property type="match status" value="1"/>
</dbReference>
<dbReference type="FunFam" id="1.20.810.10:FF:000002">
    <property type="entry name" value="Cytochrome b"/>
    <property type="match status" value="1"/>
</dbReference>
<dbReference type="Gene3D" id="1.20.810.10">
    <property type="entry name" value="Cytochrome Bc1 Complex, Chain C"/>
    <property type="match status" value="1"/>
</dbReference>
<dbReference type="InterPro" id="IPR005798">
    <property type="entry name" value="Cyt_b/b6_C"/>
</dbReference>
<dbReference type="InterPro" id="IPR036150">
    <property type="entry name" value="Cyt_b/b6_C_sf"/>
</dbReference>
<dbReference type="InterPro" id="IPR005797">
    <property type="entry name" value="Cyt_b/b6_N"/>
</dbReference>
<dbReference type="InterPro" id="IPR027387">
    <property type="entry name" value="Cytb/b6-like_sf"/>
</dbReference>
<dbReference type="InterPro" id="IPR030689">
    <property type="entry name" value="Cytochrome_b"/>
</dbReference>
<dbReference type="InterPro" id="IPR048260">
    <property type="entry name" value="Cytochrome_b_C_euk/bac"/>
</dbReference>
<dbReference type="InterPro" id="IPR048259">
    <property type="entry name" value="Cytochrome_b_N_euk/bac"/>
</dbReference>
<dbReference type="InterPro" id="IPR016174">
    <property type="entry name" value="Di-haem_cyt_TM"/>
</dbReference>
<dbReference type="PANTHER" id="PTHR19271">
    <property type="entry name" value="CYTOCHROME B"/>
    <property type="match status" value="1"/>
</dbReference>
<dbReference type="PANTHER" id="PTHR19271:SF16">
    <property type="entry name" value="CYTOCHROME B"/>
    <property type="match status" value="1"/>
</dbReference>
<dbReference type="Pfam" id="PF00032">
    <property type="entry name" value="Cytochrom_B_C"/>
    <property type="match status" value="1"/>
</dbReference>
<dbReference type="Pfam" id="PF00033">
    <property type="entry name" value="Cytochrome_B"/>
    <property type="match status" value="1"/>
</dbReference>
<dbReference type="PIRSF" id="PIRSF038885">
    <property type="entry name" value="COB"/>
    <property type="match status" value="1"/>
</dbReference>
<dbReference type="SUPFAM" id="SSF81648">
    <property type="entry name" value="a domain/subunit of cytochrome bc1 complex (Ubiquinol-cytochrome c reductase)"/>
    <property type="match status" value="1"/>
</dbReference>
<dbReference type="SUPFAM" id="SSF81342">
    <property type="entry name" value="Transmembrane di-heme cytochromes"/>
    <property type="match status" value="1"/>
</dbReference>
<dbReference type="PROSITE" id="PS51003">
    <property type="entry name" value="CYTB_CTER"/>
    <property type="match status" value="1"/>
</dbReference>
<dbReference type="PROSITE" id="PS51002">
    <property type="entry name" value="CYTB_NTER"/>
    <property type="match status" value="1"/>
</dbReference>